<name>GUP2_YEAST</name>
<feature type="signal peptide" evidence="2">
    <location>
        <begin position="1"/>
        <end position="18"/>
    </location>
</feature>
<feature type="chain" id="PRO_0000213133" description="Membrane-bound O-acyltransferase GUP2">
    <location>
        <begin position="19"/>
        <end position="609"/>
    </location>
</feature>
<feature type="topological domain" description="Lumenal" evidence="1">
    <location>
        <begin position="19"/>
        <end position="75"/>
    </location>
</feature>
<feature type="transmembrane region" description="Helical" evidence="2">
    <location>
        <begin position="76"/>
        <end position="96"/>
    </location>
</feature>
<feature type="topological domain" description="Cytoplasmic" evidence="1">
    <location>
        <begin position="97"/>
        <end position="133"/>
    </location>
</feature>
<feature type="transmembrane region" description="Helical" evidence="2">
    <location>
        <begin position="134"/>
        <end position="154"/>
    </location>
</feature>
<feature type="topological domain" description="Lumenal" evidence="1">
    <location>
        <begin position="155"/>
        <end position="169"/>
    </location>
</feature>
<feature type="transmembrane region" description="Helical" evidence="2">
    <location>
        <begin position="170"/>
        <end position="190"/>
    </location>
</feature>
<feature type="topological domain" description="Cytoplasmic" evidence="1">
    <location>
        <begin position="191"/>
        <end position="200"/>
    </location>
</feature>
<feature type="transmembrane region" description="Helical" evidence="2">
    <location>
        <begin position="201"/>
        <end position="221"/>
    </location>
</feature>
<feature type="topological domain" description="Lumenal" evidence="1">
    <location>
        <begin position="222"/>
        <end position="324"/>
    </location>
</feature>
<feature type="transmembrane region" description="Helical" evidence="2">
    <location>
        <begin position="325"/>
        <end position="345"/>
    </location>
</feature>
<feature type="topological domain" description="Cytoplasmic" evidence="1">
    <location>
        <begin position="346"/>
        <end position="371"/>
    </location>
</feature>
<feature type="transmembrane region" description="Helical" evidence="2">
    <location>
        <begin position="372"/>
        <end position="392"/>
    </location>
</feature>
<feature type="topological domain" description="Lumenal" evidence="1">
    <location>
        <begin position="393"/>
        <end position="406"/>
    </location>
</feature>
<feature type="transmembrane region" description="Helical" evidence="2">
    <location>
        <begin position="407"/>
        <end position="427"/>
    </location>
</feature>
<feature type="topological domain" description="Cytoplasmic" evidence="1">
    <location>
        <begin position="428"/>
        <end position="474"/>
    </location>
</feature>
<feature type="transmembrane region" description="Helical" evidence="2">
    <location>
        <begin position="475"/>
        <end position="495"/>
    </location>
</feature>
<feature type="topological domain" description="Lumenal" evidence="1">
    <location>
        <begin position="496"/>
        <end position="502"/>
    </location>
</feature>
<feature type="transmembrane region" description="Helical" evidence="2">
    <location>
        <begin position="503"/>
        <end position="523"/>
    </location>
</feature>
<feature type="topological domain" description="Cytoplasmic" evidence="1">
    <location>
        <begin position="524"/>
        <end position="533"/>
    </location>
</feature>
<feature type="transmembrane region" description="Helical" evidence="2">
    <location>
        <begin position="534"/>
        <end position="554"/>
    </location>
</feature>
<feature type="topological domain" description="Lumenal" evidence="1">
    <location>
        <begin position="555"/>
        <end position="575"/>
    </location>
</feature>
<feature type="transmembrane region" description="Helical" evidence="2">
    <location>
        <begin position="576"/>
        <end position="596"/>
    </location>
</feature>
<feature type="topological domain" description="Cytoplasmic" evidence="1">
    <location>
        <begin position="597"/>
        <end position="609"/>
    </location>
</feature>
<feature type="active site" evidence="1">
    <location>
        <position position="496"/>
    </location>
</feature>
<keyword id="KW-0256">Endoplasmic reticulum</keyword>
<keyword id="KW-0472">Membrane</keyword>
<keyword id="KW-1185">Reference proteome</keyword>
<keyword id="KW-0732">Signal</keyword>
<keyword id="KW-0769">Symport</keyword>
<keyword id="KW-0812">Transmembrane</keyword>
<keyword id="KW-1133">Transmembrane helix</keyword>
<keyword id="KW-0813">Transport</keyword>
<organism>
    <name type="scientific">Saccharomyces cerevisiae (strain ATCC 204508 / S288c)</name>
    <name type="common">Baker's yeast</name>
    <dbReference type="NCBI Taxonomy" id="559292"/>
    <lineage>
        <taxon>Eukaryota</taxon>
        <taxon>Fungi</taxon>
        <taxon>Dikarya</taxon>
        <taxon>Ascomycota</taxon>
        <taxon>Saccharomycotina</taxon>
        <taxon>Saccharomycetes</taxon>
        <taxon>Saccharomycetales</taxon>
        <taxon>Saccharomycetaceae</taxon>
        <taxon>Saccharomyces</taxon>
    </lineage>
</organism>
<reference key="1">
    <citation type="journal article" date="1997" name="Nature">
        <title>The nucleotide sequence of Saccharomyces cerevisiae chromosome XVI.</title>
        <authorList>
            <person name="Bussey H."/>
            <person name="Storms R.K."/>
            <person name="Ahmed A."/>
            <person name="Albermann K."/>
            <person name="Allen E."/>
            <person name="Ansorge W."/>
            <person name="Araujo R."/>
            <person name="Aparicio A."/>
            <person name="Barrell B.G."/>
            <person name="Badcock K."/>
            <person name="Benes V."/>
            <person name="Botstein D."/>
            <person name="Bowman S."/>
            <person name="Brueckner M."/>
            <person name="Carpenter J."/>
            <person name="Cherry J.M."/>
            <person name="Chung E."/>
            <person name="Churcher C.M."/>
            <person name="Coster F."/>
            <person name="Davis K."/>
            <person name="Davis R.W."/>
            <person name="Dietrich F.S."/>
            <person name="Delius H."/>
            <person name="DiPaolo T."/>
            <person name="Dubois E."/>
            <person name="Duesterhoeft A."/>
            <person name="Duncan M."/>
            <person name="Floeth M."/>
            <person name="Fortin N."/>
            <person name="Friesen J.D."/>
            <person name="Fritz C."/>
            <person name="Goffeau A."/>
            <person name="Hall J."/>
            <person name="Hebling U."/>
            <person name="Heumann K."/>
            <person name="Hilbert H."/>
            <person name="Hillier L.W."/>
            <person name="Hunicke-Smith S."/>
            <person name="Hyman R.W."/>
            <person name="Johnston M."/>
            <person name="Kalman S."/>
            <person name="Kleine K."/>
            <person name="Komp C."/>
            <person name="Kurdi O."/>
            <person name="Lashkari D."/>
            <person name="Lew H."/>
            <person name="Lin A."/>
            <person name="Lin D."/>
            <person name="Louis E.J."/>
            <person name="Marathe R."/>
            <person name="Messenguy F."/>
            <person name="Mewes H.-W."/>
            <person name="Mirtipati S."/>
            <person name="Moestl D."/>
            <person name="Mueller-Auer S."/>
            <person name="Namath A."/>
            <person name="Nentwich U."/>
            <person name="Oefner P."/>
            <person name="Pearson D."/>
            <person name="Petel F.X."/>
            <person name="Pohl T.M."/>
            <person name="Purnelle B."/>
            <person name="Rajandream M.A."/>
            <person name="Rechmann S."/>
            <person name="Rieger M."/>
            <person name="Riles L."/>
            <person name="Roberts D."/>
            <person name="Schaefer M."/>
            <person name="Scharfe M."/>
            <person name="Scherens B."/>
            <person name="Schramm S."/>
            <person name="Schroeder M."/>
            <person name="Sdicu A.-M."/>
            <person name="Tettelin H."/>
            <person name="Urrestarazu L.A."/>
            <person name="Ushinsky S."/>
            <person name="Vierendeels F."/>
            <person name="Vissers S."/>
            <person name="Voss H."/>
            <person name="Walsh S.V."/>
            <person name="Wambutt R."/>
            <person name="Wang Y."/>
            <person name="Wedler E."/>
            <person name="Wedler H."/>
            <person name="Winnett E."/>
            <person name="Zhong W.-W."/>
            <person name="Zollner A."/>
            <person name="Vo D.H."/>
            <person name="Hani J."/>
        </authorList>
    </citation>
    <scope>NUCLEOTIDE SEQUENCE [LARGE SCALE GENOMIC DNA]</scope>
    <source>
        <strain>ATCC 204508 / S288c</strain>
    </source>
</reference>
<reference key="2">
    <citation type="journal article" date="2014" name="G3 (Bethesda)">
        <title>The reference genome sequence of Saccharomyces cerevisiae: Then and now.</title>
        <authorList>
            <person name="Engel S.R."/>
            <person name="Dietrich F.S."/>
            <person name="Fisk D.G."/>
            <person name="Binkley G."/>
            <person name="Balakrishnan R."/>
            <person name="Costanzo M.C."/>
            <person name="Dwight S.S."/>
            <person name="Hitz B.C."/>
            <person name="Karra K."/>
            <person name="Nash R.S."/>
            <person name="Weng S."/>
            <person name="Wong E.D."/>
            <person name="Lloyd P."/>
            <person name="Skrzypek M.S."/>
            <person name="Miyasato S.R."/>
            <person name="Simison M."/>
            <person name="Cherry J.M."/>
        </authorList>
    </citation>
    <scope>GENOME REANNOTATION</scope>
    <source>
        <strain>ATCC 204508 / S288c</strain>
    </source>
</reference>
<reference key="3">
    <citation type="journal article" date="2000" name="Mol. Microbiol.">
        <title>GUP1 and its close homologue GUP2, encoding multimembrane-spanning proteins involved in active glycerol uptake in Saccharomyces cerevisiae.</title>
        <authorList>
            <person name="Holst B."/>
            <person name="Lunde C."/>
            <person name="Lages F."/>
            <person name="Oliveira R."/>
            <person name="Lucas C."/>
            <person name="Kielland-Brandt M.C."/>
        </authorList>
    </citation>
    <scope>FUNCTION</scope>
</reference>
<reference key="4">
    <citation type="journal article" date="2004" name="Curr. Genet.">
        <title>Expression studies of GUP1 and GUP2, genes involved in glycerol active transport in Saccharomyces cerevisiae, using semi-quantitative RT-PCR.</title>
        <authorList>
            <person name="Oliveira R."/>
            <person name="Lucas C."/>
        </authorList>
    </citation>
    <scope>INDUCTION</scope>
</reference>
<reference key="5">
    <citation type="journal article" date="2004" name="FEMS Yeast Res.">
        <title>Yeast orthologues associated with glycerol transport and metabolism.</title>
        <authorList>
            <person name="Neves L."/>
            <person name="Oliveira R."/>
            <person name="Lucas C."/>
        </authorList>
    </citation>
    <scope>FUNCTION</scope>
</reference>
<reference key="6">
    <citation type="journal article" date="2015" name="J. Basic Microbiol.">
        <title>Elemental biochemical analysis of the polysaccharides in the extracellular matrix of the yeast Saccharomyces cerevisiae.</title>
        <authorList>
            <person name="Faria-Oliveira F."/>
            <person name="Carvalho J."/>
            <person name="Belmiro C.L."/>
            <person name="Ramalho G."/>
            <person name="Pavao M."/>
            <person name="Lucas C."/>
            <person name="Ferreira C."/>
        </authorList>
    </citation>
    <scope>FUNCTION</scope>
</reference>
<reference key="7">
    <citation type="journal article" date="2016" name="Nat. Methods">
        <title>One library to make them all: streamlining the creation of yeast libraries via a SWAp-Tag strategy.</title>
        <authorList>
            <person name="Yofe I."/>
            <person name="Weill U."/>
            <person name="Meurer M."/>
            <person name="Chuartzman S."/>
            <person name="Zalckvar E."/>
            <person name="Goldman O."/>
            <person name="Ben-Dor S."/>
            <person name="Schuetze C."/>
            <person name="Wiedemann N."/>
            <person name="Knop M."/>
            <person name="Khmelinskii A."/>
            <person name="Schuldiner M."/>
        </authorList>
    </citation>
    <scope>SUBCELLULAR LOCATION [LARGE SCALE ANALYSIS]</scope>
</reference>
<evidence type="ECO:0000250" key="1">
    <source>
        <dbReference type="UniProtKB" id="P53154"/>
    </source>
</evidence>
<evidence type="ECO:0000255" key="2"/>
<evidence type="ECO:0000269" key="3">
    <source>
    </source>
</evidence>
<evidence type="ECO:0000269" key="4">
    <source>
    </source>
</evidence>
<evidence type="ECO:0000269" key="5">
    <source>
    </source>
</evidence>
<evidence type="ECO:0000305" key="6"/>
<evidence type="ECO:0000305" key="7">
    <source>
    </source>
</evidence>
<evidence type="ECO:0000305" key="8">
    <source>
    </source>
</evidence>
<proteinExistence type="evidence at transcript level"/>
<dbReference type="EMBL" id="Z73545">
    <property type="protein sequence ID" value="CAA97902.1"/>
    <property type="molecule type" value="Genomic_DNA"/>
</dbReference>
<dbReference type="EMBL" id="Z73544">
    <property type="protein sequence ID" value="CAA97901.1"/>
    <property type="molecule type" value="Genomic_DNA"/>
</dbReference>
<dbReference type="EMBL" id="BK006949">
    <property type="protein sequence ID" value="DAA11246.1"/>
    <property type="molecule type" value="Genomic_DNA"/>
</dbReference>
<dbReference type="PIR" id="S65208">
    <property type="entry name" value="S65208"/>
</dbReference>
<dbReference type="RefSeq" id="NP_015135.1">
    <property type="nucleotide sequence ID" value="NM_001184003.1"/>
</dbReference>
<dbReference type="SMR" id="Q08929"/>
<dbReference type="BioGRID" id="35994">
    <property type="interactions" value="76"/>
</dbReference>
<dbReference type="DIP" id="DIP-8868N"/>
<dbReference type="FunCoup" id="Q08929">
    <property type="interactions" value="122"/>
</dbReference>
<dbReference type="IntAct" id="Q08929">
    <property type="interactions" value="4"/>
</dbReference>
<dbReference type="MINT" id="Q08929"/>
<dbReference type="STRING" id="4932.YPL189W"/>
<dbReference type="iPTMnet" id="Q08929"/>
<dbReference type="PaxDb" id="4932-YPL189W"/>
<dbReference type="PeptideAtlas" id="Q08929"/>
<dbReference type="EnsemblFungi" id="YPL189W_mRNA">
    <property type="protein sequence ID" value="YPL189W"/>
    <property type="gene ID" value="YPL189W"/>
</dbReference>
<dbReference type="GeneID" id="855912"/>
<dbReference type="KEGG" id="sce:YPL189W"/>
<dbReference type="AGR" id="SGD:S000006110"/>
<dbReference type="SGD" id="S000006110">
    <property type="gene designation" value="GUP2"/>
</dbReference>
<dbReference type="VEuPathDB" id="FungiDB:YPL189W"/>
<dbReference type="eggNOG" id="KOG3860">
    <property type="taxonomic scope" value="Eukaryota"/>
</dbReference>
<dbReference type="GeneTree" id="ENSGT00530000063629"/>
<dbReference type="HOGENOM" id="CLU_021430_1_1_1"/>
<dbReference type="InParanoid" id="Q08929"/>
<dbReference type="OMA" id="NMWAVFT"/>
<dbReference type="OrthoDB" id="420606at2759"/>
<dbReference type="BioCyc" id="YEAST:G3O-34082-MONOMER"/>
<dbReference type="BioGRID-ORCS" id="855912">
    <property type="hits" value="0 hits in 10 CRISPR screens"/>
</dbReference>
<dbReference type="PRO" id="PR:Q08929"/>
<dbReference type="Proteomes" id="UP000002311">
    <property type="component" value="Chromosome XVI"/>
</dbReference>
<dbReference type="RNAct" id="Q08929">
    <property type="molecule type" value="protein"/>
</dbReference>
<dbReference type="GO" id="GO:0005783">
    <property type="term" value="C:endoplasmic reticulum"/>
    <property type="evidence" value="ECO:0007005"/>
    <property type="project" value="SGD"/>
</dbReference>
<dbReference type="GO" id="GO:0005789">
    <property type="term" value="C:endoplasmic reticulum membrane"/>
    <property type="evidence" value="ECO:0007669"/>
    <property type="project" value="UniProtKB-SubCell"/>
</dbReference>
<dbReference type="GO" id="GO:0016020">
    <property type="term" value="C:membrane"/>
    <property type="evidence" value="ECO:0000255"/>
    <property type="project" value="SGD"/>
</dbReference>
<dbReference type="GO" id="GO:0008374">
    <property type="term" value="F:O-acyltransferase activity"/>
    <property type="evidence" value="ECO:0000247"/>
    <property type="project" value="SGD"/>
</dbReference>
<dbReference type="GO" id="GO:0015293">
    <property type="term" value="F:symporter activity"/>
    <property type="evidence" value="ECO:0007669"/>
    <property type="project" value="UniProtKB-KW"/>
</dbReference>
<dbReference type="GO" id="GO:0071475">
    <property type="term" value="P:cellular hyperosmotic salinity response"/>
    <property type="evidence" value="ECO:0000316"/>
    <property type="project" value="SGD"/>
</dbReference>
<dbReference type="GO" id="GO:0015793">
    <property type="term" value="P:glycerol transmembrane transport"/>
    <property type="evidence" value="ECO:0000316"/>
    <property type="project" value="SGD"/>
</dbReference>
<dbReference type="GO" id="GO:0006506">
    <property type="term" value="P:GPI anchor biosynthetic process"/>
    <property type="evidence" value="ECO:0000318"/>
    <property type="project" value="GO_Central"/>
</dbReference>
<dbReference type="InterPro" id="IPR051085">
    <property type="entry name" value="MB_O-acyltransferase"/>
</dbReference>
<dbReference type="InterPro" id="IPR004299">
    <property type="entry name" value="MBOAT_fam"/>
</dbReference>
<dbReference type="PANTHER" id="PTHR13285">
    <property type="entry name" value="ACYLTRANSFERASE"/>
    <property type="match status" value="1"/>
</dbReference>
<dbReference type="PANTHER" id="PTHR13285:SF18">
    <property type="entry name" value="PROTEIN-CYSTEINE N-PALMITOYLTRANSFERASE RASP"/>
    <property type="match status" value="1"/>
</dbReference>
<dbReference type="Pfam" id="PF03062">
    <property type="entry name" value="MBOAT"/>
    <property type="match status" value="1"/>
</dbReference>
<protein>
    <recommendedName>
        <fullName evidence="6">Membrane-bound O-acyltransferase GUP2</fullName>
    </recommendedName>
    <alternativeName>
        <fullName>Glycerol uptake protein 2</fullName>
    </alternativeName>
</protein>
<gene>
    <name type="primary">GUP2</name>
    <name type="ordered locus">YPL189W</name>
</gene>
<accession>Q08929</accession>
<accession>D6W3I0</accession>
<comment type="function">
    <text evidence="1 4">Probable membrane-bound O-acyltransferase (By similarity). Together with GUP1, has an influence on the chemical composition of the yeast extracellular matrix (yECM) in yeast multicellular aggregates, such as biofilms and colonies (PubMed:25589358).</text>
</comment>
<comment type="subcellular location">
    <subcellularLocation>
        <location evidence="5">Endoplasmic reticulum membrane</location>
        <topology evidence="2">Multi-pass membrane protein</topology>
    </subcellularLocation>
</comment>
<comment type="induction">
    <text evidence="3">Expressed constitutively.</text>
</comment>
<comment type="similarity">
    <text evidence="6">Belongs to the membrane-bound acyltransferase family.</text>
</comment>
<comment type="caution">
    <text evidence="7 8">Was originally thought to be involved in active uptake of glycerol driven by electrogenic proton symport (PubMed:10931309), but has later been shown to be an acyltransferase and that effects on glycerol transport may be indirect (PubMed:15381122).</text>
</comment>
<sequence length="609" mass="71289">MSMLRIWSCIVHFFSVQALDSRIKPDIEFKRRQRIFINSSKEENGSSSSAVTVTRNPVLSSNSPSPPLWNTWEFRLYYLAFTVVVPFMIKAALATSSESNPNYYKFSGLLAHGWILGRKVDNSDPQYRFFRSNFFLLAILILLQIILKKVFVKFSKIPKTKFDFACGLVFVCFMYGINSVKLFTHAFIFFTLAHSLKRKRLIAAFAIWSYGIFTLFINQKMKNLPFNNIAIILSPMDQWYKGIVPRWDFFFNFTLLRLLSYSMDFLERWHEQLSRQPSIDYDDRRPEFRKSLSGSTLQTIYESGKNVLEEKERLVAEHHIQDYNFINFIAYITYAPLFLVGPIITFNDYLYQSENKLPSLTKKNIGFYALKVFSSLLLMEIILHYIYVGAIARTKAWNNDTPLQQAMIALFNLNIMYLKLLIPWRLFRLWAMVDGIDAPENMLRCVDNNYSTVGFWRAWHTSFNKWVIRYIYVPFGGSNNKILTSFAVFSFVAIWHDIQLRVLFWGWLTVLLLLGETYITNCFSRYRFRSWYRFVCGIGAAINICMMMIINVYGFCLGAEGTKLLLKGIFNNSHSPEFLTAVMVSLFIAVQVMFEIREEEKRHGINLKC</sequence>